<comment type="function">
    <text evidence="6">Required for synaptic transmission regulation (PubMed:33539324). It probably controls the recruitement of voltage-gated calcium channels to the presynaptic membrane, and modulates neurotransmitter release.</text>
</comment>
<comment type="subunit">
    <text evidence="1 6 8">Interacts with RIMS1 and RIMS2 (By similarity). Interacts with TSPO. Interacts with CACNA1A (PubMed:33539324).</text>
</comment>
<comment type="interaction">
    <interactant intactId="EBI-5915931">
        <id>O95153</id>
    </interactant>
    <interactant intactId="EBI-8567699">
        <id>Q9H013</id>
        <label>ADAM19</label>
    </interactant>
    <organismsDiffer>false</organismsDiffer>
    <experiments>2</experiments>
</comment>
<comment type="interaction">
    <interactant intactId="EBI-5915931">
        <id>O95153</id>
    </interactant>
    <interactant intactId="EBI-766279">
        <id>O00555</id>
        <label>CACNA1A</label>
    </interactant>
    <organismsDiffer>false</organismsDiffer>
    <experiments>2</experiments>
</comment>
<comment type="subcellular location">
    <subcellularLocation>
        <location evidence="8">Cytoplasm</location>
    </subcellularLocation>
    <subcellularLocation>
        <location evidence="8">Mitochondrion</location>
    </subcellularLocation>
    <text>Preferentially expressed in the mitochondria in the presence of TSPO.</text>
</comment>
<comment type="alternative products">
    <event type="alternative splicing"/>
    <isoform>
        <id>O95153-1</id>
        <name>1</name>
        <sequence type="displayed"/>
    </isoform>
    <isoform>
        <id>O95153-2</id>
        <name>2</name>
        <sequence type="described" ref="VSP_009204"/>
    </isoform>
    <isoform>
        <id>O95153-3</id>
        <name>3</name>
        <sequence type="described" ref="VSP_009205"/>
    </isoform>
</comment>
<comment type="tissue specificity">
    <text evidence="8">Predominantly expressed in brain, pituitary gland and thymus in adults. In adult brain, highest expression found in temporal lobe and the putamen, followed by amygdala, caudate nucleus, cerebral cortex, occipital and frontal lobe. A high expression level is also observed in fetal tissues like brain, heart, kidney and thymus.</text>
</comment>
<comment type="domain">
    <text evidence="1">The SH3 and proline-rich domain is required for the interaction with TSPO and the second SH3 domain mediates binding to a proline-rich motif in RIMS1 and RIMS2.</text>
</comment>
<comment type="disease" evidence="6">
    <disease id="DI-06727">
        <name>Dystonia 22, adult-onset</name>
        <acronym>DYT22AO</acronym>
        <description>A form of dystonia, a disorder defined by the presence of sustained involuntary muscle contraction, often leading to abnormal postures. DYT22AO is an autosomal recessive form characterized by focal dystonia or tremor and mild cognitive impairment.</description>
        <dbReference type="MIM" id="620456"/>
    </disease>
    <text>The disease may be caused by variants affecting the gene represented in this entry.</text>
</comment>
<comment type="disease" evidence="6">
    <disease id="DI-06726">
        <name>Dystonia 22, juvenile-onset</name>
        <acronym>DYT22JO</acronym>
        <description>A form of dystonia, a disorder defined by the presence of sustained involuntary muscle contraction, often leading to abnormal postures. DYT22JO is an autosomal recessive form characterized by progressive, generalized dystonia associated with intellectual disability, cognitive decline, and cerebellar atrophy.</description>
        <dbReference type="MIM" id="620453"/>
    </disease>
    <text>The disease may be caused by variants affecting the gene represented in this entry.</text>
</comment>
<comment type="similarity">
    <text evidence="11">Belongs to the RIMBP family.</text>
</comment>
<comment type="caution">
    <text evidence="11">PubMed:9915832 demonstrated interaction with TSPO but later PubMed:12435798 demonstrated in the rat ortholog that is not associated with TSPO in the brain.</text>
</comment>
<comment type="sequence caution" evidence="11">
    <conflict type="erroneous initiation">
        <sequence resource="EMBL-CDS" id="BAA31587"/>
    </conflict>
</comment>
<proteinExistence type="evidence at protein level"/>
<feature type="chain" id="PRO_0000221380" description="Peripheral-type benzodiazepine receptor-associated protein 1">
    <location>
        <begin position="1"/>
        <end position="1857"/>
    </location>
</feature>
<feature type="domain" description="SH3 1" evidence="2">
    <location>
        <begin position="653"/>
        <end position="720"/>
    </location>
</feature>
<feature type="domain" description="Fibronectin type-III 1" evidence="3">
    <location>
        <begin position="791"/>
        <end position="882"/>
    </location>
</feature>
<feature type="domain" description="Fibronectin type-III 2" evidence="3">
    <location>
        <begin position="884"/>
        <end position="976"/>
    </location>
</feature>
<feature type="domain" description="Fibronectin type-III 3" evidence="3">
    <location>
        <begin position="981"/>
        <end position="1081"/>
    </location>
</feature>
<feature type="domain" description="SH3 2" evidence="2">
    <location>
        <begin position="1625"/>
        <end position="1693"/>
    </location>
</feature>
<feature type="domain" description="SH3 3" evidence="2">
    <location>
        <begin position="1764"/>
        <end position="1831"/>
    </location>
</feature>
<feature type="region of interest" description="Disordered" evidence="4">
    <location>
        <begin position="1"/>
        <end position="103"/>
    </location>
</feature>
<feature type="region of interest" description="Disordered" evidence="4">
    <location>
        <begin position="284"/>
        <end position="321"/>
    </location>
</feature>
<feature type="region of interest" description="Disordered" evidence="4">
    <location>
        <begin position="565"/>
        <end position="629"/>
    </location>
</feature>
<feature type="region of interest" description="Disordered" evidence="4">
    <location>
        <begin position="729"/>
        <end position="789"/>
    </location>
</feature>
<feature type="region of interest" description="Disordered" evidence="4">
    <location>
        <begin position="1083"/>
        <end position="1311"/>
    </location>
</feature>
<feature type="region of interest" description="Disordered" evidence="4">
    <location>
        <begin position="1330"/>
        <end position="1479"/>
    </location>
</feature>
<feature type="region of interest" description="Disordered" evidence="4">
    <location>
        <begin position="1501"/>
        <end position="1601"/>
    </location>
</feature>
<feature type="region of interest" description="Disordered" evidence="4">
    <location>
        <begin position="1723"/>
        <end position="1761"/>
    </location>
</feature>
<feature type="region of interest" description="Disordered" evidence="4">
    <location>
        <begin position="1823"/>
        <end position="1857"/>
    </location>
</feature>
<feature type="compositionally biased region" description="Basic and acidic residues" evidence="4">
    <location>
        <begin position="55"/>
        <end position="67"/>
    </location>
</feature>
<feature type="compositionally biased region" description="Polar residues" evidence="4">
    <location>
        <begin position="87"/>
        <end position="96"/>
    </location>
</feature>
<feature type="compositionally biased region" description="Pro residues" evidence="4">
    <location>
        <begin position="289"/>
        <end position="298"/>
    </location>
</feature>
<feature type="compositionally biased region" description="Low complexity" evidence="4">
    <location>
        <begin position="299"/>
        <end position="316"/>
    </location>
</feature>
<feature type="compositionally biased region" description="Low complexity" evidence="4">
    <location>
        <begin position="603"/>
        <end position="616"/>
    </location>
</feature>
<feature type="compositionally biased region" description="Low complexity" evidence="4">
    <location>
        <begin position="755"/>
        <end position="764"/>
    </location>
</feature>
<feature type="compositionally biased region" description="Low complexity" evidence="4">
    <location>
        <begin position="1098"/>
        <end position="1116"/>
    </location>
</feature>
<feature type="compositionally biased region" description="Basic and acidic residues" evidence="4">
    <location>
        <begin position="1138"/>
        <end position="1147"/>
    </location>
</feature>
<feature type="compositionally biased region" description="Polar residues" evidence="4">
    <location>
        <begin position="1201"/>
        <end position="1218"/>
    </location>
</feature>
<feature type="compositionally biased region" description="Acidic residues" evidence="4">
    <location>
        <begin position="1259"/>
        <end position="1274"/>
    </location>
</feature>
<feature type="compositionally biased region" description="Polar residues" evidence="4">
    <location>
        <begin position="1278"/>
        <end position="1292"/>
    </location>
</feature>
<feature type="compositionally biased region" description="Acidic residues" evidence="4">
    <location>
        <begin position="1333"/>
        <end position="1346"/>
    </location>
</feature>
<feature type="compositionally biased region" description="Basic and acidic residues" evidence="4">
    <location>
        <begin position="1420"/>
        <end position="1429"/>
    </location>
</feature>
<feature type="compositionally biased region" description="Basic and acidic residues" evidence="4">
    <location>
        <begin position="1554"/>
        <end position="1586"/>
    </location>
</feature>
<feature type="splice variant" id="VSP_009204" description="In isoform 2." evidence="10">
    <location>
        <begin position="191"/>
        <end position="250"/>
    </location>
</feature>
<feature type="splice variant" id="VSP_009205" description="In isoform 3." evidence="9">
    <original>RTRRRRVQC</original>
    <variation>DWGCTTQGSPGPPGGPCTPSSGSAPRIERGEPQGRSEKVWGFFSKGKQLLRRLGSGKKE</variation>
    <location>
        <begin position="1849"/>
        <end position="1857"/>
    </location>
</feature>
<feature type="sequence variant" id="VAR_017446" description="In dbSNP:rs2072145.">
    <original>Q</original>
    <variation>R</variation>
    <location>
        <position position="514"/>
    </location>
</feature>
<feature type="sequence variant" id="VAR_017447" description="In dbSNP:rs2072147.">
    <original>A</original>
    <variation>T</variation>
    <location>
        <position position="586"/>
    </location>
</feature>
<feature type="sequence variant" id="VAR_070193" description="In dbSNP:rs373894175." evidence="5">
    <original>G</original>
    <variation>R</variation>
    <location>
        <position position="652"/>
    </location>
</feature>
<feature type="sequence variant" id="VAR_031662" description="In dbSNP:rs9913145." evidence="7">
    <original>Q</original>
    <variation>R</variation>
    <location>
        <position position="817"/>
    </location>
</feature>
<feature type="sequence variant" id="VAR_031663" description="In dbSNP:rs9905604." evidence="7">
    <original>W</original>
    <variation>R</variation>
    <location>
        <position position="851"/>
    </location>
</feature>
<feature type="sequence variant" id="VAR_017448" description="In dbSNP:rs3744099." evidence="7">
    <original>H</original>
    <variation>L</variation>
    <location>
        <position position="1118"/>
    </location>
</feature>
<feature type="sequence variant" id="VAR_017449" description="In dbSNP:rs2680704." evidence="7">
    <original>A</original>
    <variation>P</variation>
    <location>
        <position position="1140"/>
    </location>
</feature>
<feature type="sequence variant" id="VAR_017450" description="In dbSNP:rs3744101.">
    <original>R</original>
    <variation>C</variation>
    <location>
        <position position="1253"/>
    </location>
</feature>
<feature type="sequence variant" id="VAR_031664" description="In dbSNP:rs11079346." evidence="7">
    <original>H</original>
    <variation>R</variation>
    <location>
        <position position="1728"/>
    </location>
</feature>
<feature type="sequence variant" id="VAR_088765" description="In DYT22AO; likely pathogenic; abnormally increased synaptic transmission when expressed in RIMBPs-deficient autaptic neuronal cultures; increased interaction with CACNA1A; dbSNP:rs752560074." evidence="6">
    <original>G</original>
    <variation>S</variation>
    <location>
        <position position="1808"/>
    </location>
</feature>
<feature type="sequence variant" id="VAR_017451" description="In dbSNP:rs2301868.">
    <original>G</original>
    <variation>E</variation>
    <location>
        <position position="1830"/>
    </location>
</feature>
<feature type="sequence conflict" description="In Ref. 1; AAD11957." evidence="11" ref="1">
    <original>G</original>
    <variation>R</variation>
    <location>
        <position position="1525"/>
    </location>
</feature>
<evidence type="ECO:0000250" key="1"/>
<evidence type="ECO:0000255" key="2">
    <source>
        <dbReference type="PROSITE-ProRule" id="PRU00192"/>
    </source>
</evidence>
<evidence type="ECO:0000255" key="3">
    <source>
        <dbReference type="PROSITE-ProRule" id="PRU00316"/>
    </source>
</evidence>
<evidence type="ECO:0000256" key="4">
    <source>
        <dbReference type="SAM" id="MobiDB-lite"/>
    </source>
</evidence>
<evidence type="ECO:0000269" key="5">
    <source>
    </source>
</evidence>
<evidence type="ECO:0000269" key="6">
    <source>
    </source>
</evidence>
<evidence type="ECO:0000269" key="7">
    <source>
    </source>
</evidence>
<evidence type="ECO:0000269" key="8">
    <source>
    </source>
</evidence>
<evidence type="ECO:0000303" key="9">
    <source>
    </source>
</evidence>
<evidence type="ECO:0000303" key="10">
    <source>
    </source>
</evidence>
<evidence type="ECO:0000305" key="11"/>
<evidence type="ECO:0000312" key="12">
    <source>
        <dbReference type="HGNC" id="HGNC:16831"/>
    </source>
</evidence>
<reference key="1">
    <citation type="journal article" date="1999" name="J. Biol. Chem.">
        <title>Cloning and characterization of PRAX-1. A new protein that specifically interacts with the peripheral benzodiazepine receptor.</title>
        <authorList>
            <person name="Galiegue S."/>
            <person name="Jbilo O."/>
            <person name="Combes T."/>
            <person name="Bribes E."/>
            <person name="Carayon P."/>
            <person name="Le Fur G."/>
            <person name="Casellas P."/>
        </authorList>
    </citation>
    <scope>NUCLEOTIDE SEQUENCE [MRNA] (ISOFORM 1)</scope>
    <scope>SUBCELLULAR LOCATION</scope>
    <scope>TISSUE SPECIFICITY</scope>
    <scope>INTERACTION WITH TSPO</scope>
    <source>
        <tissue>Brain</tissue>
    </source>
</reference>
<reference key="2">
    <citation type="journal article" date="1998" name="DNA Res.">
        <title>Prediction of the coding sequences of unidentified human genes. X. The complete sequences of 100 new cDNA clones from brain which can code for large proteins in vitro.</title>
        <authorList>
            <person name="Ishikawa K."/>
            <person name="Nagase T."/>
            <person name="Suyama M."/>
            <person name="Miyajima N."/>
            <person name="Tanaka A."/>
            <person name="Kotani H."/>
            <person name="Nomura N."/>
            <person name="Ohara O."/>
        </authorList>
    </citation>
    <scope>NUCLEOTIDE SEQUENCE [LARGE SCALE MRNA] (ISOFORM 2)</scope>
    <scope>VARIANTS ARG-817; ARG-851; LEU-1118; PRO-1140 AND ARG-1728</scope>
    <source>
        <tissue>Brain</tissue>
    </source>
</reference>
<reference key="3">
    <citation type="journal article" date="2004" name="Genome Res.">
        <title>The status, quality, and expansion of the NIH full-length cDNA project: the Mammalian Gene Collection (MGC).</title>
        <authorList>
            <consortium name="The MGC Project Team"/>
        </authorList>
    </citation>
    <scope>NUCLEOTIDE SEQUENCE [LARGE SCALE MRNA] OF 1737-1857 (ISOFORM 3)</scope>
    <source>
        <tissue>Brain</tissue>
    </source>
</reference>
<reference key="4">
    <citation type="journal article" date="2013" name="Am. J. Hum. Genet.">
        <title>Identification of mutations in SLC24A4, encoding a potassium-dependent sodium/calcium exchanger, as a cause of amelogenesis imperfecta.</title>
        <authorList>
            <person name="Parry D.A."/>
            <person name="Poulter J.A."/>
            <person name="Logan C.V."/>
            <person name="Brookes S.J."/>
            <person name="Jafri H."/>
            <person name="Ferguson C.H."/>
            <person name="Anwari B.M."/>
            <person name="Rashid Y."/>
            <person name="Zhao H."/>
            <person name="Johnson C.A."/>
            <person name="Inglehearn C.F."/>
            <person name="Mighell A.J."/>
        </authorList>
    </citation>
    <scope>VARIANT ARG-652</scope>
</reference>
<reference key="5">
    <citation type="journal article" date="2021" name="J. Clin. Invest.">
        <title>Biallelic variants in TSPOAP1, encoding the active-zone protein RIMBP1, cause autosomal recessive dystonia.</title>
        <authorList>
            <person name="Mencacci N.E."/>
            <person name="Brockmann M.M."/>
            <person name="Dai J."/>
            <person name="Pajusalu S."/>
            <person name="Atasu B."/>
            <person name="Campos J."/>
            <person name="Pino G."/>
            <person name="Gonzalez-Latapi P."/>
            <person name="Patzke C."/>
            <person name="Schwake M."/>
            <person name="Tucci A."/>
            <person name="Pittman A."/>
            <person name="Simon-Sanchez J."/>
            <person name="Carvill G.L."/>
            <person name="Balint B."/>
            <person name="Wiethoff S."/>
            <person name="Warner T.T."/>
            <person name="Papandreou A."/>
            <person name="Soo A."/>
            <person name="Rein R."/>
            <person name="Kadastik-Eerme L."/>
            <person name="Puusepp S."/>
            <person name="Reinson K."/>
            <person name="Tomberg T."/>
            <person name="Hanagasi H."/>
            <person name="Gasser T."/>
            <person name="Bhatia K.P."/>
            <person name="Kurian M.A."/>
            <person name="Lohmann E."/>
            <person name="Ounap K."/>
            <person name="Rosenmund C."/>
            <person name="Suedhof T.C."/>
            <person name="Wood N.W."/>
            <person name="Krainc D."/>
            <person name="Acuna C."/>
        </authorList>
    </citation>
    <scope>VARIANT DYT22AO SER-1808</scope>
    <scope>CHARACTERIZATION OF VARIANT DYT22AO SER-1808</scope>
    <scope>INVOLVEMENT IN DYT22AO</scope>
    <scope>INVOLVEMENT IN DYT22JO</scope>
    <scope>INTERACTION WITH CACNA1A</scope>
    <scope>FUNCTION</scope>
</reference>
<dbReference type="EMBL" id="AF039571">
    <property type="protein sequence ID" value="AAD11957.1"/>
    <property type="molecule type" value="mRNA"/>
</dbReference>
<dbReference type="EMBL" id="AB014512">
    <property type="protein sequence ID" value="BAA31587.2"/>
    <property type="status" value="ALT_INIT"/>
    <property type="molecule type" value="mRNA"/>
</dbReference>
<dbReference type="EMBL" id="BC031401">
    <property type="protein sequence ID" value="AAH31401.1"/>
    <property type="molecule type" value="mRNA"/>
</dbReference>
<dbReference type="CCDS" id="CCDS11605.1">
    <molecule id="O95153-1"/>
</dbReference>
<dbReference type="CCDS" id="CCDS45742.1">
    <molecule id="O95153-2"/>
</dbReference>
<dbReference type="PIR" id="T00391">
    <property type="entry name" value="T00391"/>
</dbReference>
<dbReference type="RefSeq" id="NP_001248764.1">
    <property type="nucleotide sequence ID" value="NM_001261835.1"/>
</dbReference>
<dbReference type="RefSeq" id="NP_004749.2">
    <molecule id="O95153-1"/>
    <property type="nucleotide sequence ID" value="NM_004758.4"/>
</dbReference>
<dbReference type="RefSeq" id="NP_077729.1">
    <molecule id="O95153-2"/>
    <property type="nucleotide sequence ID" value="NM_024418.3"/>
</dbReference>
<dbReference type="RefSeq" id="XP_006722236.1">
    <property type="nucleotide sequence ID" value="XM_006722173.2"/>
</dbReference>
<dbReference type="SMR" id="O95153"/>
<dbReference type="BioGRID" id="114680">
    <property type="interactions" value="23"/>
</dbReference>
<dbReference type="FunCoup" id="O95153">
    <property type="interactions" value="1523"/>
</dbReference>
<dbReference type="IntAct" id="O95153">
    <property type="interactions" value="11"/>
</dbReference>
<dbReference type="MINT" id="O95153"/>
<dbReference type="STRING" id="9606.ENSP00000345824"/>
<dbReference type="BindingDB" id="O95153"/>
<dbReference type="ChEMBL" id="CHEMBL5169104"/>
<dbReference type="TCDB" id="8.A.34.3.1">
    <property type="family name" value="the endophilin (endophilin) family"/>
</dbReference>
<dbReference type="CarbonylDB" id="O95153"/>
<dbReference type="GlyGen" id="O95153">
    <property type="glycosylation" value="4 sites"/>
</dbReference>
<dbReference type="iPTMnet" id="O95153"/>
<dbReference type="PhosphoSitePlus" id="O95153"/>
<dbReference type="BioMuta" id="TSPOAP1"/>
<dbReference type="jPOST" id="O95153"/>
<dbReference type="MassIVE" id="O95153"/>
<dbReference type="PaxDb" id="9606-ENSP00000345824"/>
<dbReference type="PeptideAtlas" id="O95153"/>
<dbReference type="ProteomicsDB" id="50666">
    <molecule id="O95153-1"/>
</dbReference>
<dbReference type="ProteomicsDB" id="50667">
    <molecule id="O95153-2"/>
</dbReference>
<dbReference type="ProteomicsDB" id="50668">
    <molecule id="O95153-3"/>
</dbReference>
<dbReference type="Antibodypedia" id="18369">
    <property type="antibodies" value="24 antibodies from 11 providers"/>
</dbReference>
<dbReference type="DNASU" id="9256"/>
<dbReference type="Ensembl" id="ENST00000268893.10">
    <molecule id="O95153-2"/>
    <property type="protein sequence ID" value="ENSP00000268893.6"/>
    <property type="gene ID" value="ENSG00000005379.17"/>
</dbReference>
<dbReference type="Ensembl" id="ENST00000343736.9">
    <molecule id="O95153-1"/>
    <property type="protein sequence ID" value="ENSP00000345824.4"/>
    <property type="gene ID" value="ENSG00000005379.17"/>
</dbReference>
<dbReference type="GeneID" id="9256"/>
<dbReference type="KEGG" id="hsa:9256"/>
<dbReference type="MANE-Select" id="ENST00000343736.9">
    <property type="protein sequence ID" value="ENSP00000345824.4"/>
    <property type="RefSeq nucleotide sequence ID" value="NM_004758.4"/>
    <property type="RefSeq protein sequence ID" value="NP_004749.2"/>
</dbReference>
<dbReference type="UCSC" id="uc002ivx.6">
    <molecule id="O95153-1"/>
    <property type="organism name" value="human"/>
</dbReference>
<dbReference type="AGR" id="HGNC:16831"/>
<dbReference type="CTD" id="9256"/>
<dbReference type="DisGeNET" id="9256"/>
<dbReference type="GeneCards" id="TSPOAP1"/>
<dbReference type="HGNC" id="HGNC:16831">
    <property type="gene designation" value="TSPOAP1"/>
</dbReference>
<dbReference type="HPA" id="ENSG00000005379">
    <property type="expression patterns" value="Tissue enhanced (brain)"/>
</dbReference>
<dbReference type="MalaCards" id="TSPOAP1"/>
<dbReference type="MIM" id="610764">
    <property type="type" value="gene"/>
</dbReference>
<dbReference type="MIM" id="620453">
    <property type="type" value="phenotype"/>
</dbReference>
<dbReference type="MIM" id="620456">
    <property type="type" value="phenotype"/>
</dbReference>
<dbReference type="neXtProt" id="NX_O95153"/>
<dbReference type="NIAGADS" id="ENSG00000005379"/>
<dbReference type="OpenTargets" id="ENSG00000005379"/>
<dbReference type="Orphanet" id="101150">
    <property type="disease" value="Autosomal recessive dopa-responsive dystonia"/>
</dbReference>
<dbReference type="PharmGKB" id="PA128394545"/>
<dbReference type="VEuPathDB" id="HostDB:ENSG00000005379"/>
<dbReference type="eggNOG" id="KOG3632">
    <property type="taxonomic scope" value="Eukaryota"/>
</dbReference>
<dbReference type="GeneTree" id="ENSGT00950000183203"/>
<dbReference type="HOGENOM" id="CLU_001979_1_0_1"/>
<dbReference type="InParanoid" id="O95153"/>
<dbReference type="OMA" id="VSAPMPR"/>
<dbReference type="OrthoDB" id="4158657at2759"/>
<dbReference type="PAN-GO" id="O95153">
    <property type="GO annotations" value="2 GO annotations based on evolutionary models"/>
</dbReference>
<dbReference type="PhylomeDB" id="O95153"/>
<dbReference type="TreeFam" id="TF316230"/>
<dbReference type="PathwayCommons" id="O95153"/>
<dbReference type="Reactome" id="R-HSA-181429">
    <property type="pathway name" value="Serotonin Neurotransmitter Release Cycle"/>
</dbReference>
<dbReference type="Reactome" id="R-HSA-181430">
    <property type="pathway name" value="Norepinephrine Neurotransmitter Release Cycle"/>
</dbReference>
<dbReference type="Reactome" id="R-HSA-196108">
    <property type="pathway name" value="Pregnenolone biosynthesis"/>
</dbReference>
<dbReference type="Reactome" id="R-HSA-210500">
    <property type="pathway name" value="Glutamate Neurotransmitter Release Cycle"/>
</dbReference>
<dbReference type="Reactome" id="R-HSA-212676">
    <property type="pathway name" value="Dopamine Neurotransmitter Release Cycle"/>
</dbReference>
<dbReference type="Reactome" id="R-HSA-264642">
    <property type="pathway name" value="Acetylcholine Neurotransmitter Release Cycle"/>
</dbReference>
<dbReference type="SignaLink" id="O95153"/>
<dbReference type="SIGNOR" id="O95153"/>
<dbReference type="BioGRID-ORCS" id="9256">
    <property type="hits" value="15 hits in 1147 CRISPR screens"/>
</dbReference>
<dbReference type="ChiTaRS" id="TSPOAP1">
    <property type="organism name" value="human"/>
</dbReference>
<dbReference type="GenomeRNAi" id="9256"/>
<dbReference type="Pharos" id="O95153">
    <property type="development level" value="Tbio"/>
</dbReference>
<dbReference type="PRO" id="PR:O95153"/>
<dbReference type="Proteomes" id="UP000005640">
    <property type="component" value="Chromosome 17"/>
</dbReference>
<dbReference type="RNAct" id="O95153">
    <property type="molecule type" value="protein"/>
</dbReference>
<dbReference type="Bgee" id="ENSG00000005379">
    <property type="expression patterns" value="Expressed in right uterine tube and 177 other cell types or tissues"/>
</dbReference>
<dbReference type="ExpressionAtlas" id="O95153">
    <property type="expression patterns" value="baseline and differential"/>
</dbReference>
<dbReference type="GO" id="GO:0044305">
    <property type="term" value="C:calyx of Held"/>
    <property type="evidence" value="ECO:0007669"/>
    <property type="project" value="Ensembl"/>
</dbReference>
<dbReference type="GO" id="GO:0005737">
    <property type="term" value="C:cytoplasm"/>
    <property type="evidence" value="ECO:0000314"/>
    <property type="project" value="UniProtKB"/>
</dbReference>
<dbReference type="GO" id="GO:0005829">
    <property type="term" value="C:cytosol"/>
    <property type="evidence" value="ECO:0000304"/>
    <property type="project" value="Reactome"/>
</dbReference>
<dbReference type="GO" id="GO:0098978">
    <property type="term" value="C:glutamatergic synapse"/>
    <property type="evidence" value="ECO:0007669"/>
    <property type="project" value="Ensembl"/>
</dbReference>
<dbReference type="GO" id="GO:0005739">
    <property type="term" value="C:mitochondrion"/>
    <property type="evidence" value="ECO:0000314"/>
    <property type="project" value="UniProtKB"/>
</dbReference>
<dbReference type="GO" id="GO:0030156">
    <property type="term" value="F:benzodiazepine receptor binding"/>
    <property type="evidence" value="ECO:0000353"/>
    <property type="project" value="UniProtKB"/>
</dbReference>
<dbReference type="GO" id="GO:0099626">
    <property type="term" value="F:voltage-gated calcium channel activity involved in regulation of presynaptic cytosolic calcium levels"/>
    <property type="evidence" value="ECO:0007669"/>
    <property type="project" value="Ensembl"/>
</dbReference>
<dbReference type="GO" id="GO:0046928">
    <property type="term" value="P:regulation of neurotransmitter secretion"/>
    <property type="evidence" value="ECO:0000315"/>
    <property type="project" value="UniProtKB"/>
</dbReference>
<dbReference type="CDD" id="cd00063">
    <property type="entry name" value="FN3"/>
    <property type="match status" value="1"/>
</dbReference>
<dbReference type="CDD" id="cd12014">
    <property type="entry name" value="SH3_RIM-BP_1"/>
    <property type="match status" value="1"/>
</dbReference>
<dbReference type="CDD" id="cd12012">
    <property type="entry name" value="SH3_RIM-BP_2"/>
    <property type="match status" value="1"/>
</dbReference>
<dbReference type="CDD" id="cd12013">
    <property type="entry name" value="SH3_RIM-BP_3"/>
    <property type="match status" value="1"/>
</dbReference>
<dbReference type="FunFam" id="2.30.30.40:FF:000023">
    <property type="entry name" value="RIMS-binding protein 2 isoform F"/>
    <property type="match status" value="1"/>
</dbReference>
<dbReference type="FunFam" id="2.30.30.40:FF:000006">
    <property type="entry name" value="RIMS-binding protein 2 isoform X1"/>
    <property type="match status" value="1"/>
</dbReference>
<dbReference type="FunFam" id="2.60.40.10:FF:000072">
    <property type="entry name" value="RIMS-binding protein 2 isoform X1"/>
    <property type="match status" value="1"/>
</dbReference>
<dbReference type="FunFam" id="2.30.30.40:FF:000016">
    <property type="entry name" value="RIMS-binding protein 2 isoform X2"/>
    <property type="match status" value="1"/>
</dbReference>
<dbReference type="Gene3D" id="2.60.40.10">
    <property type="entry name" value="Immunoglobulins"/>
    <property type="match status" value="1"/>
</dbReference>
<dbReference type="Gene3D" id="2.30.30.40">
    <property type="entry name" value="SH3 Domains"/>
    <property type="match status" value="3"/>
</dbReference>
<dbReference type="InterPro" id="IPR003961">
    <property type="entry name" value="FN3_dom"/>
</dbReference>
<dbReference type="InterPro" id="IPR036116">
    <property type="entry name" value="FN3_sf"/>
</dbReference>
<dbReference type="InterPro" id="IPR013783">
    <property type="entry name" value="Ig-like_fold"/>
</dbReference>
<dbReference type="InterPro" id="IPR035753">
    <property type="entry name" value="RIM-BP_SH3_2"/>
</dbReference>
<dbReference type="InterPro" id="IPR035755">
    <property type="entry name" value="RIM-BP_SH3_3"/>
</dbReference>
<dbReference type="InterPro" id="IPR040325">
    <property type="entry name" value="RIMBP1/2/3"/>
</dbReference>
<dbReference type="InterPro" id="IPR036028">
    <property type="entry name" value="SH3-like_dom_sf"/>
</dbReference>
<dbReference type="InterPro" id="IPR001452">
    <property type="entry name" value="SH3_domain"/>
</dbReference>
<dbReference type="PANTHER" id="PTHR14234:SF20">
    <property type="entry name" value="PERIPHERAL-TYPE BENZODIAZEPINE RECEPTOR-ASSOCIATED PROTEIN 1"/>
    <property type="match status" value="1"/>
</dbReference>
<dbReference type="PANTHER" id="PTHR14234">
    <property type="entry name" value="RIM BINDING PROTEIN-RELATED"/>
    <property type="match status" value="1"/>
</dbReference>
<dbReference type="Pfam" id="PF07653">
    <property type="entry name" value="SH3_2"/>
    <property type="match status" value="2"/>
</dbReference>
<dbReference type="Pfam" id="PF14604">
    <property type="entry name" value="SH3_9"/>
    <property type="match status" value="1"/>
</dbReference>
<dbReference type="SMART" id="SM00060">
    <property type="entry name" value="FN3"/>
    <property type="match status" value="3"/>
</dbReference>
<dbReference type="SMART" id="SM00326">
    <property type="entry name" value="SH3"/>
    <property type="match status" value="3"/>
</dbReference>
<dbReference type="SUPFAM" id="SSF49265">
    <property type="entry name" value="Fibronectin type III"/>
    <property type="match status" value="2"/>
</dbReference>
<dbReference type="SUPFAM" id="SSF50044">
    <property type="entry name" value="SH3-domain"/>
    <property type="match status" value="3"/>
</dbReference>
<dbReference type="PROSITE" id="PS50853">
    <property type="entry name" value="FN3"/>
    <property type="match status" value="3"/>
</dbReference>
<dbReference type="PROSITE" id="PS50002">
    <property type="entry name" value="SH3"/>
    <property type="match status" value="3"/>
</dbReference>
<name>RIMB1_HUMAN</name>
<accession>O95153</accession>
<accession>O75111</accession>
<accession>Q8N5W3</accession>
<sequence length="1857" mass="200051">MEQLTTLPRPGDPGAMEPWALPTWHSWTPGRGGEPSSAAPSIADTPPAALQLQELRSEESSKPKGDGSSRPVGGTDPEGAEACLPSLGQQASSSGPACQRPEDEEVEAFLKAKLNMSFGDRPNLELLRALGELRQRCAILKEENQMLRKSSFPETEEKVRRLKRKNAELAVIAKRLEERARKLQETNLRVVSAPLPRPGTSLELCRKALARQRARDLSETASALLAKDKQIAALQRECRELQARLTLVGKEGPQWLHVRDFDRLLRESQREVLRLQRQIALRNQRETLPLPPSWPPGPALQARAGAPAPGAPGEATPQEDADNLPVILGEPEKEQRVQQLESELSKKRKKCESLEQEARKKQRRCEELELQLRQAQNENARLVEENSRLSGRATEKEQVEWENAELRGQLLGVTQERDSALRKSQGLQSKLESLEQVLKHMREVAQRRQQLEVEHEQARLSLREKQEEVRRLQQAQAEAQREHEGAVQLLESTLDSMQARVRELEEQCRSQTEQFSLLAQELQAFRLHPGPLDLLTSALDCGSLGDCPPPPCCCSIPQPCRGSGPKDLDLPPGSPGRCTPKSSEPAPATLTGVPRRTAKKAESLSNSSHSESIHNSPKSCPTPEVDTASEVEELEADSVSLLPAAPEGSRGGARIQVFLARYSYNPFEGPNENPEAELPLTAGEYIYIYGNMDEDGFFEGELMDGRRGLVPSNFVERVSDDDLLTSLPPELADLSHSSGPELSFLSVGGGGSSSGGQSSVGRSQPRPEEEDAGDELSLSPSPEGLGEPPAVPYPRRLVVLKQLAHSVVLAWEPPPEQVELHGFHICVNGELRQALGPGAPPKAVLENLDLWAGPLHISVQALTSRGSSDPLRCCLAVGARAGVVPSQLRVHRLTATSAEITWVPGNSNLAHAIYLNGEECPPASPSTYWATFCHLRPGTPYQAQVEAQLPPQGPWEPGWERLEQRAATLQFTTLPAGPPDAPLDVQIEPGPSPGILIISWLPVTIDAAGTSNGVRVTGYAIYADGQKIMEVASPTAGSVLVELSQLQLLQVCREVVVRTMSPHGESADSIPAPITPALAPASLPARVSCPSPHPSPEARAPLASASPGPGDPSSPLQHPAPLGTQEPPGAPPASPSREMAKGSHEDPPAPCSQEEAGAAVLGTSEERTASTSTLGEKDPGPAAPSLAKQEAEWTAGEACPASSSTQGARAQQAPNTEMCQGGDPGSGLRPRAEKEDTAELGVHLVNSLVDHGRNSDLSDIQEEEEEEEEEEEEELGSRTCSFQKQVAGNSIRENGAKSQPDPFCETDSDEEILEQILELPLQQFCSKKLFSIPEEEEEEEEDEEEEKSGAGCSSRDPGPPEPALLGLGCDSGQPRRPGQCPLSPESSRAGDCLEDMPGLVGGSSRRRGGGSPEKPPSRRRPPDPREHCSRLLSNNGPQASGRLGPTRERGGLPVIEGPRTGLEASGRGRLGPSRRCSRGRALEPGLASCLSPKCLEISIEYDSEDEQEAGSGGISITSSCYPGDGEAWGTATVGRPRGPPKANSGPKPYPRLPAWEKGEPERRGRSATGRAKEPLSRATETGEARGQDGSGRRGPQKRGVRVLRPSTAELVPARSPSETLAYQHLPVRIFVALFDYDPVSMSPNPDAGEEELPFREGQILKVFGDKDADGFYQGEGGGRTGYIPCNMVAEVAVDSPAGRQQLLQRGYLSPDILLEGSGNGPFVYSTAHTTGPPPKPRRSKKAESEGPAQPCPGPPKLVPSADLKAPHSMVAAFDYNPQESSPNMDVEAELPFRAGDVITVFGGMDDDGFYYGELNGQRGLVPSNFLEGPGPEAGGLDREPRTPQAESQRTRRRRVQC</sequence>
<organism>
    <name type="scientific">Homo sapiens</name>
    <name type="common">Human</name>
    <dbReference type="NCBI Taxonomy" id="9606"/>
    <lineage>
        <taxon>Eukaryota</taxon>
        <taxon>Metazoa</taxon>
        <taxon>Chordata</taxon>
        <taxon>Craniata</taxon>
        <taxon>Vertebrata</taxon>
        <taxon>Euteleostomi</taxon>
        <taxon>Mammalia</taxon>
        <taxon>Eutheria</taxon>
        <taxon>Euarchontoglires</taxon>
        <taxon>Primates</taxon>
        <taxon>Haplorrhini</taxon>
        <taxon>Catarrhini</taxon>
        <taxon>Hominidae</taxon>
        <taxon>Homo</taxon>
    </lineage>
</organism>
<gene>
    <name evidence="12" type="primary">TSPOAP1</name>
    <name type="synonym">BZRAP1</name>
    <name type="synonym">KIAA0612</name>
    <name type="synonym">RBP1</name>
    <name type="synonym">RIMBP1</name>
</gene>
<keyword id="KW-0025">Alternative splicing</keyword>
<keyword id="KW-0963">Cytoplasm</keyword>
<keyword id="KW-0225">Disease variant</keyword>
<keyword id="KW-1023">Dystonia</keyword>
<keyword id="KW-0991">Intellectual disability</keyword>
<keyword id="KW-0496">Mitochondrion</keyword>
<keyword id="KW-1267">Proteomics identification</keyword>
<keyword id="KW-1185">Reference proteome</keyword>
<keyword id="KW-0677">Repeat</keyword>
<keyword id="KW-0728">SH3 domain</keyword>
<protein>
    <recommendedName>
        <fullName>Peripheral-type benzodiazepine receptor-associated protein 1</fullName>
        <shortName>PRAX-1</shortName>
    </recommendedName>
    <alternativeName>
        <fullName>Peripheral benzodiazepine receptor-interacting protein</fullName>
        <shortName>PBR-IP</shortName>
    </alternativeName>
    <alternativeName>
        <fullName>RIMS-binding protein 1</fullName>
        <shortName>RIM-BP1</shortName>
    </alternativeName>
    <alternativeName>
        <fullName evidence="12">TSPO-associated protein 1</fullName>
    </alternativeName>
</protein>